<dbReference type="EMBL" id="X65878">
    <property type="protein sequence ID" value="CAA46709.1"/>
    <property type="molecule type" value="Genomic_DNA"/>
</dbReference>
<dbReference type="EMBL" id="CM000070">
    <property type="protein sequence ID" value="EAL28004.1"/>
    <property type="status" value="ALT_SEQ"/>
    <property type="molecule type" value="Genomic_DNA"/>
</dbReference>
<dbReference type="PIR" id="S40692">
    <property type="entry name" value="S40692"/>
</dbReference>
<dbReference type="RefSeq" id="XP_001358861.1">
    <property type="nucleotide sequence ID" value="XM_001358824.3"/>
</dbReference>
<dbReference type="SMR" id="P28679"/>
<dbReference type="FunCoup" id="P28679">
    <property type="interactions" value="41"/>
</dbReference>
<dbReference type="STRING" id="46245.P28679"/>
<dbReference type="GlyCosmos" id="P28679">
    <property type="glycosylation" value="1 site, No reported glycans"/>
</dbReference>
<dbReference type="EnsemblMetazoa" id="FBtr0285604">
    <property type="protein sequence ID" value="FBpp0284042"/>
    <property type="gene ID" value="FBgn0012708"/>
</dbReference>
<dbReference type="GeneID" id="4801828"/>
<dbReference type="KEGG" id="dpo:4801828"/>
<dbReference type="CTD" id="42261"/>
<dbReference type="eggNOG" id="KOG3656">
    <property type="taxonomic scope" value="Eukaryota"/>
</dbReference>
<dbReference type="HOGENOM" id="CLU_009579_3_0_1"/>
<dbReference type="InParanoid" id="P28679"/>
<dbReference type="OMA" id="KILFIWM"/>
<dbReference type="PhylomeDB" id="P28679"/>
<dbReference type="ChiTaRS" id="Rh2">
    <property type="organism name" value="fly"/>
</dbReference>
<dbReference type="Proteomes" id="UP000001819">
    <property type="component" value="Chromosome 2"/>
</dbReference>
<dbReference type="Bgee" id="FBgn0012708">
    <property type="expression patterns" value="Expressed in insect adult head"/>
</dbReference>
<dbReference type="GO" id="GO:0016020">
    <property type="term" value="C:membrane"/>
    <property type="evidence" value="ECO:0007669"/>
    <property type="project" value="UniProtKB-SubCell"/>
</dbReference>
<dbReference type="GO" id="GO:0008020">
    <property type="term" value="F:G protein-coupled photoreceptor activity"/>
    <property type="evidence" value="ECO:0007669"/>
    <property type="project" value="UniProtKB-ARBA"/>
</dbReference>
<dbReference type="GO" id="GO:0007602">
    <property type="term" value="P:phototransduction"/>
    <property type="evidence" value="ECO:0007669"/>
    <property type="project" value="UniProtKB-KW"/>
</dbReference>
<dbReference type="GO" id="GO:0007601">
    <property type="term" value="P:visual perception"/>
    <property type="evidence" value="ECO:0007669"/>
    <property type="project" value="UniProtKB-KW"/>
</dbReference>
<dbReference type="CDD" id="cd15079">
    <property type="entry name" value="7tmA_photoreceptors_insect"/>
    <property type="match status" value="1"/>
</dbReference>
<dbReference type="FunFam" id="1.20.1070.10:FF:000044">
    <property type="entry name" value="Opsin, ultraviolet-sensitive"/>
    <property type="match status" value="1"/>
</dbReference>
<dbReference type="Gene3D" id="1.20.1070.10">
    <property type="entry name" value="Rhodopsin 7-helix transmembrane proteins"/>
    <property type="match status" value="1"/>
</dbReference>
<dbReference type="InterPro" id="IPR050125">
    <property type="entry name" value="GPCR_opsins"/>
</dbReference>
<dbReference type="InterPro" id="IPR000276">
    <property type="entry name" value="GPCR_Rhodpsn"/>
</dbReference>
<dbReference type="InterPro" id="IPR017452">
    <property type="entry name" value="GPCR_Rhodpsn_7TM"/>
</dbReference>
<dbReference type="InterPro" id="IPR001760">
    <property type="entry name" value="Opsin"/>
</dbReference>
<dbReference type="InterPro" id="IPR001735">
    <property type="entry name" value="Opsin_RH1/RH2"/>
</dbReference>
<dbReference type="InterPro" id="IPR027430">
    <property type="entry name" value="Retinal_BS"/>
</dbReference>
<dbReference type="PANTHER" id="PTHR24240">
    <property type="entry name" value="OPSIN"/>
    <property type="match status" value="1"/>
</dbReference>
<dbReference type="Pfam" id="PF00001">
    <property type="entry name" value="7tm_1"/>
    <property type="match status" value="1"/>
</dbReference>
<dbReference type="PRINTS" id="PR00237">
    <property type="entry name" value="GPCRRHODOPSN"/>
</dbReference>
<dbReference type="PRINTS" id="PR00238">
    <property type="entry name" value="OPSIN"/>
</dbReference>
<dbReference type="PRINTS" id="PR00576">
    <property type="entry name" value="OPSINRH1RH2"/>
</dbReference>
<dbReference type="SUPFAM" id="SSF81321">
    <property type="entry name" value="Family A G protein-coupled receptor-like"/>
    <property type="match status" value="1"/>
</dbReference>
<dbReference type="PROSITE" id="PS00237">
    <property type="entry name" value="G_PROTEIN_RECEP_F1_1"/>
    <property type="match status" value="1"/>
</dbReference>
<dbReference type="PROSITE" id="PS50262">
    <property type="entry name" value="G_PROTEIN_RECEP_F1_2"/>
    <property type="match status" value="1"/>
</dbReference>
<dbReference type="PROSITE" id="PS00238">
    <property type="entry name" value="OPSIN"/>
    <property type="match status" value="1"/>
</dbReference>
<name>OPS2_DROPS</name>
<accession>P28679</accession>
<accession>Q298F1</accession>
<keyword id="KW-0157">Chromophore</keyword>
<keyword id="KW-1015">Disulfide bond</keyword>
<keyword id="KW-0297">G-protein coupled receptor</keyword>
<keyword id="KW-0325">Glycoprotein</keyword>
<keyword id="KW-0472">Membrane</keyword>
<keyword id="KW-0597">Phosphoprotein</keyword>
<keyword id="KW-0600">Photoreceptor protein</keyword>
<keyword id="KW-0675">Receptor</keyword>
<keyword id="KW-1185">Reference proteome</keyword>
<keyword id="KW-0681">Retinal protein</keyword>
<keyword id="KW-0716">Sensory transduction</keyword>
<keyword id="KW-0807">Transducer</keyword>
<keyword id="KW-0812">Transmembrane</keyword>
<keyword id="KW-1133">Transmembrane helix</keyword>
<keyword id="KW-0844">Vision</keyword>
<evidence type="ECO:0000255" key="1"/>
<evidence type="ECO:0000255" key="2">
    <source>
        <dbReference type="PROSITE-ProRule" id="PRU00521"/>
    </source>
</evidence>
<evidence type="ECO:0000256" key="3">
    <source>
        <dbReference type="SAM" id="MobiDB-lite"/>
    </source>
</evidence>
<evidence type="ECO:0000305" key="4"/>
<sequence length="381" mass="42733">MERSLLPEPPLAMALLGPRFEAQTGGNRSVLDNVLPDMAPLVNPYWSRFAPMDPTMSKILGLFTLVILIISCCGNGVVVYIFGGTKSLRTPANLLVLNLAFSDFCMMASQSPVMIINFYYETWVLGPLWCDIYAACGSLFGCVSIWSMCMIAFDRYNVIVKGINGTPMTIKTSIMKIAFIWMMAVFWTIMPLIGWSSYVPEGNLTACSIDYMTRQWNPRSYLITYSLFVYYTPLFMICYSYWFIIATVAAHEKAMRDQAKKMNVKSLRSSEDCDKSAENKLAKVALTTISLWFMAWTPYLIICYFGLFKIDGLTPLTTIWGATFAKTSAVYNPIVYGISHPKYRLVLKEKCPMCVCGSTDEPKPDAPPSDTETTSEAESKA</sequence>
<organism>
    <name type="scientific">Drosophila pseudoobscura pseudoobscura</name>
    <name type="common">Fruit fly</name>
    <dbReference type="NCBI Taxonomy" id="46245"/>
    <lineage>
        <taxon>Eukaryota</taxon>
        <taxon>Metazoa</taxon>
        <taxon>Ecdysozoa</taxon>
        <taxon>Arthropoda</taxon>
        <taxon>Hexapoda</taxon>
        <taxon>Insecta</taxon>
        <taxon>Pterygota</taxon>
        <taxon>Neoptera</taxon>
        <taxon>Endopterygota</taxon>
        <taxon>Diptera</taxon>
        <taxon>Brachycera</taxon>
        <taxon>Muscomorpha</taxon>
        <taxon>Ephydroidea</taxon>
        <taxon>Drosophilidae</taxon>
        <taxon>Drosophila</taxon>
        <taxon>Sophophora</taxon>
    </lineage>
</organism>
<comment type="function">
    <text>Visual pigments are the light-absorbing molecules that mediate vision. They consist of an apoprotein, opsin, covalently linked to cis-retinal.</text>
</comment>
<comment type="biophysicochemical properties">
    <absorption>
        <max>420 nm</max>
    </absorption>
</comment>
<comment type="subcellular location">
    <subcellularLocation>
        <location>Membrane</location>
        <topology>Multi-pass membrane protein</topology>
    </subcellularLocation>
</comment>
<comment type="PTM">
    <text>Some or all of the Ser/Thr residues present in the C-terminal part may be phosphorylated.</text>
</comment>
<comment type="miscellaneous">
    <text>Opsin Rh2 is the predominant opsin expressed in the dorsal ocelli.</text>
</comment>
<comment type="similarity">
    <text evidence="2">Belongs to the G-protein coupled receptor 1 family. Opsin subfamily.</text>
</comment>
<comment type="sequence caution" evidence="4">
    <conflict type="erroneous gene model prediction">
        <sequence resource="EMBL-CDS" id="EAL28004"/>
    </conflict>
</comment>
<reference key="1">
    <citation type="journal article" date="1992" name="Genetics">
        <title>Variable rates of evolution among Drosophila opsin genes.</title>
        <authorList>
            <person name="Carulli J.P."/>
            <person name="Hartl D.L."/>
        </authorList>
    </citation>
    <scope>NUCLEOTIDE SEQUENCE [GENOMIC DNA]</scope>
    <source>
        <strain>Apple Hill</strain>
    </source>
</reference>
<reference key="2">
    <citation type="journal article" date="2005" name="Genome Res.">
        <title>Comparative genome sequencing of Drosophila pseudoobscura: chromosomal, gene, and cis-element evolution.</title>
        <authorList>
            <person name="Richards S."/>
            <person name="Liu Y."/>
            <person name="Bettencourt B.R."/>
            <person name="Hradecky P."/>
            <person name="Letovsky S."/>
            <person name="Nielsen R."/>
            <person name="Thornton K."/>
            <person name="Hubisz M.J."/>
            <person name="Chen R."/>
            <person name="Meisel R.P."/>
            <person name="Couronne O."/>
            <person name="Hua S."/>
            <person name="Smith M.A."/>
            <person name="Zhang P."/>
            <person name="Liu J."/>
            <person name="Bussemaker H.J."/>
            <person name="van Batenburg M.F."/>
            <person name="Howells S.L."/>
            <person name="Scherer S.E."/>
            <person name="Sodergren E."/>
            <person name="Matthews B.B."/>
            <person name="Crosby M.A."/>
            <person name="Schroeder A.J."/>
            <person name="Ortiz-Barrientos D."/>
            <person name="Rives C.M."/>
            <person name="Metzker M.L."/>
            <person name="Muzny D.M."/>
            <person name="Scott G."/>
            <person name="Steffen D."/>
            <person name="Wheeler D.A."/>
            <person name="Worley K.C."/>
            <person name="Havlak P."/>
            <person name="Durbin K.J."/>
            <person name="Egan A."/>
            <person name="Gill R."/>
            <person name="Hume J."/>
            <person name="Morgan M.B."/>
            <person name="Miner G."/>
            <person name="Hamilton C."/>
            <person name="Huang Y."/>
            <person name="Waldron L."/>
            <person name="Verduzco D."/>
            <person name="Clerc-Blankenburg K.P."/>
            <person name="Dubchak I."/>
            <person name="Noor M.A.F."/>
            <person name="Anderson W."/>
            <person name="White K.P."/>
            <person name="Clark A.G."/>
            <person name="Schaeffer S.W."/>
            <person name="Gelbart W.M."/>
            <person name="Weinstock G.M."/>
            <person name="Gibbs R.A."/>
        </authorList>
    </citation>
    <scope>NUCLEOTIDE SEQUENCE [LARGE SCALE GENOMIC DNA]</scope>
    <source>
        <strain>MV2-25 / Tucson 14011-0121.94</strain>
    </source>
</reference>
<proteinExistence type="evidence at protein level"/>
<feature type="chain" id="PRO_0000197626" description="Opsin Rh2">
    <location>
        <begin position="1"/>
        <end position="381"/>
    </location>
</feature>
<feature type="topological domain" description="Extracellular">
    <location>
        <begin position="1"/>
        <end position="56"/>
    </location>
</feature>
<feature type="transmembrane region" description="Helical; Name=1" evidence="1">
    <location>
        <begin position="57"/>
        <end position="81"/>
    </location>
</feature>
<feature type="topological domain" description="Cytoplasmic">
    <location>
        <begin position="82"/>
        <end position="93"/>
    </location>
</feature>
<feature type="transmembrane region" description="Helical; Name=2" evidence="1">
    <location>
        <begin position="94"/>
        <end position="119"/>
    </location>
</feature>
<feature type="topological domain" description="Extracellular">
    <location>
        <begin position="120"/>
        <end position="133"/>
    </location>
</feature>
<feature type="transmembrane region" description="Helical; Name=3" evidence="1">
    <location>
        <begin position="134"/>
        <end position="153"/>
    </location>
</feature>
<feature type="topological domain" description="Cytoplasmic">
    <location>
        <begin position="154"/>
        <end position="172"/>
    </location>
</feature>
<feature type="transmembrane region" description="Helical; Name=4" evidence="1">
    <location>
        <begin position="173"/>
        <end position="196"/>
    </location>
</feature>
<feature type="topological domain" description="Extracellular">
    <location>
        <begin position="197"/>
        <end position="220"/>
    </location>
</feature>
<feature type="transmembrane region" description="Helical; Name=5" evidence="1">
    <location>
        <begin position="221"/>
        <end position="248"/>
    </location>
</feature>
<feature type="topological domain" description="Cytoplasmic">
    <location>
        <begin position="249"/>
        <end position="283"/>
    </location>
</feature>
<feature type="transmembrane region" description="Helical; Name=6" evidence="1">
    <location>
        <begin position="284"/>
        <end position="307"/>
    </location>
</feature>
<feature type="topological domain" description="Extracellular">
    <location>
        <begin position="308"/>
        <end position="314"/>
    </location>
</feature>
<feature type="transmembrane region" description="Helical; Name=7" evidence="1">
    <location>
        <begin position="315"/>
        <end position="339"/>
    </location>
</feature>
<feature type="topological domain" description="Cytoplasmic">
    <location>
        <begin position="340"/>
        <end position="381"/>
    </location>
</feature>
<feature type="region of interest" description="Disordered" evidence="3">
    <location>
        <begin position="358"/>
        <end position="381"/>
    </location>
</feature>
<feature type="compositionally biased region" description="Polar residues" evidence="3">
    <location>
        <begin position="370"/>
        <end position="381"/>
    </location>
</feature>
<feature type="modified residue" description="N6-(retinylidene)lysine">
    <location>
        <position position="326"/>
    </location>
</feature>
<feature type="glycosylation site" description="N-linked (GlcNAc...) asparagine" evidence="4">
    <location>
        <position position="27"/>
    </location>
</feature>
<feature type="disulfide bond" evidence="2">
    <location>
        <begin position="130"/>
        <end position="207"/>
    </location>
</feature>
<feature type="sequence conflict" description="In Ref. 1; CAA46709." evidence="4" ref="1">
    <original>Y</original>
    <variation>H</variation>
    <location>
        <position position="45"/>
    </location>
</feature>
<feature type="sequence conflict" description="In Ref. 1; CAA46709." evidence="4" ref="1">
    <original>KY</original>
    <variation>ND</variation>
    <location>
        <begin position="342"/>
        <end position="343"/>
    </location>
</feature>
<feature type="sequence conflict" description="In Ref. 1; CAA46709." evidence="4" ref="1">
    <original>S</original>
    <variation>T</variation>
    <location>
        <position position="358"/>
    </location>
</feature>
<feature type="sequence conflict" description="In Ref. 1; CAA46709." evidence="4" ref="1">
    <original>A</original>
    <variation>D</variation>
    <location>
        <position position="381"/>
    </location>
</feature>
<protein>
    <recommendedName>
        <fullName>Opsin Rh2</fullName>
    </recommendedName>
    <alternativeName>
        <fullName>Ocellar opsin</fullName>
    </alternativeName>
</protein>
<gene>
    <name type="primary">Rh2</name>
    <name type="ORF">GA14120</name>
</gene>